<sequence>TDEITSFSIPKFRPDQPNLIFQGGGYTTKEKLTLTKAVKNTVGRALYSLPIHIWDSETGNVADFTTTFIFVIDAPNGYNVADGFTFFIAPVDTKPQTGGGYLGVFNGKDYDKTAQTVAVEFDTFYNAAWDPSNGKRHIGIDVNTIKSISTKSWNLQNGEEAHVAISFNATTNVLSVTLLYPNLTGYTLSEVVPLKDVVPEWVRIGFSATTGAEYATHEVLSWTFLSELTGPSN</sequence>
<comment type="subunit">
    <text evidence="2">Heterodimer of an alpha and a beta chain.</text>
</comment>
<comment type="miscellaneous">
    <text>Binds one manganese (or another transition metal) ion and one calcium ion. The metal ions are essential for the saccharide-binding and cell-agglutinating activities.</text>
</comment>
<comment type="similarity">
    <text evidence="4">Belongs to the leguminous lectin family.</text>
</comment>
<keyword id="KW-0002">3D-structure</keyword>
<keyword id="KW-0106">Calcium</keyword>
<keyword id="KW-0903">Direct protein sequencing</keyword>
<keyword id="KW-0325">Glycoprotein</keyword>
<keyword id="KW-0430">Lectin</keyword>
<keyword id="KW-0464">Manganese</keyword>
<keyword id="KW-0479">Metal-binding</keyword>
<name>LEC_VICFA</name>
<dbReference type="PIR" id="A92369">
    <property type="entry name" value="FVVFBA"/>
</dbReference>
<dbReference type="PDB" id="2B7Y">
    <property type="method" value="X-ray"/>
    <property type="resolution" value="3.00 A"/>
    <property type="chains" value="A/C=1-182, B/D=183-233"/>
</dbReference>
<dbReference type="PDBsum" id="2B7Y"/>
<dbReference type="SMR" id="P02871"/>
<dbReference type="UniLectin" id="P02871"/>
<dbReference type="iPTMnet" id="P02871"/>
<dbReference type="EvolutionaryTrace" id="P02871"/>
<dbReference type="GO" id="GO:0030246">
    <property type="term" value="F:carbohydrate binding"/>
    <property type="evidence" value="ECO:0007669"/>
    <property type="project" value="UniProtKB-KW"/>
</dbReference>
<dbReference type="GO" id="GO:0046872">
    <property type="term" value="F:metal ion binding"/>
    <property type="evidence" value="ECO:0007669"/>
    <property type="project" value="UniProtKB-KW"/>
</dbReference>
<dbReference type="CDD" id="cd06899">
    <property type="entry name" value="lectin_legume_LecRK_Arcelin_ConA"/>
    <property type="match status" value="1"/>
</dbReference>
<dbReference type="Gene3D" id="2.60.120.200">
    <property type="match status" value="1"/>
</dbReference>
<dbReference type="InterPro" id="IPR013320">
    <property type="entry name" value="ConA-like_dom_sf"/>
</dbReference>
<dbReference type="InterPro" id="IPR016363">
    <property type="entry name" value="L-lectin"/>
</dbReference>
<dbReference type="InterPro" id="IPR000985">
    <property type="entry name" value="Lectin_LegA_CS"/>
</dbReference>
<dbReference type="InterPro" id="IPR019825">
    <property type="entry name" value="Lectin_legB_Mn/Ca_BS"/>
</dbReference>
<dbReference type="InterPro" id="IPR001220">
    <property type="entry name" value="Legume_lectin_dom"/>
</dbReference>
<dbReference type="InterPro" id="IPR050258">
    <property type="entry name" value="Leguminous_Lectin"/>
</dbReference>
<dbReference type="PANTHER" id="PTHR32401">
    <property type="entry name" value="CONCANAVALIN A-LIKE LECTIN FAMILY PROTEIN"/>
    <property type="match status" value="1"/>
</dbReference>
<dbReference type="PANTHER" id="PTHR32401:SF45">
    <property type="entry name" value="LECTIN"/>
    <property type="match status" value="1"/>
</dbReference>
<dbReference type="Pfam" id="PF00139">
    <property type="entry name" value="Lectin_legB"/>
    <property type="match status" value="1"/>
</dbReference>
<dbReference type="PIRSF" id="PIRSF002690">
    <property type="entry name" value="L-type_lectin_plant"/>
    <property type="match status" value="1"/>
</dbReference>
<dbReference type="SUPFAM" id="SSF49899">
    <property type="entry name" value="Concanavalin A-like lectins/glucanases"/>
    <property type="match status" value="1"/>
</dbReference>
<dbReference type="PROSITE" id="PS00308">
    <property type="entry name" value="LECTIN_LEGUME_ALPHA"/>
    <property type="match status" value="1"/>
</dbReference>
<dbReference type="PROSITE" id="PS00307">
    <property type="entry name" value="LECTIN_LEGUME_BETA"/>
    <property type="match status" value="1"/>
</dbReference>
<accession>P02871</accession>
<proteinExistence type="evidence at protein level"/>
<protein>
    <recommendedName>
        <fullName>Favin</fullName>
    </recommendedName>
    <alternativeName>
        <fullName>Lectin</fullName>
    </alternativeName>
    <component>
        <recommendedName>
            <fullName>Favin beta chain</fullName>
        </recommendedName>
    </component>
    <component>
        <recommendedName>
            <fullName>Favin alpha chain</fullName>
        </recommendedName>
    </component>
</protein>
<reference key="1">
    <citation type="journal article" date="1982" name="J. Biol. Chem.">
        <title>Amino acid sequence and variant forms of favin, a lectin from Vicia faba.</title>
        <authorList>
            <person name="Hopp T.P."/>
            <person name="Hemperly J.J."/>
            <person name="Cunningham B.A."/>
        </authorList>
    </citation>
    <scope>PROTEIN SEQUENCE OF 1-182</scope>
    <scope>SEQUENCE REVISION</scope>
</reference>
<reference key="2">
    <citation type="journal article" date="1979" name="Proc. Natl. Acad. Sci. U.S.A.">
        <title>Favin versus concanavalin A: circularly permuted amino acid sequences.</title>
        <authorList>
            <person name="Cunningham B.A."/>
            <person name="Hemperly J.J."/>
            <person name="Hopp T.P."/>
            <person name="Edelman G.M."/>
        </authorList>
    </citation>
    <scope>PRELIMINARY PROTEIN SEQUENCE OF 1-182</scope>
</reference>
<reference key="3">
    <citation type="journal article" date="1979" name="J. Biol. Chem.">
        <title>The chemical characterization of favin, a lectin isolated from Vicia faba.</title>
        <authorList>
            <person name="Hemperly J.J."/>
            <person name="Hopp T.P."/>
            <person name="Becker J.W."/>
            <person name="Cunningham B.A."/>
        </authorList>
    </citation>
    <scope>PROTEIN SEQUENCE OF 183-233</scope>
</reference>
<reference key="4">
    <citation type="journal article" date="1986" name="Science">
        <title>Three-dimensional structure of favin: saccharide binding-cyclic permutation in leguminous lectins.</title>
        <authorList>
            <person name="Reeke G.N. Jr."/>
            <person name="Becker J.W."/>
        </authorList>
    </citation>
    <scope>X-RAY CRYSTALLOGRAPHY (2.8 ANGSTROMS) IN COMPLEX WITH GLUCOSE</scope>
</reference>
<feature type="chain" id="PRO_0000017648" description="Favin beta chain">
    <location>
        <begin position="1"/>
        <end position="182"/>
    </location>
</feature>
<feature type="chain" id="PRO_0000017649" description="Favin alpha chain">
    <location>
        <begin position="183"/>
        <end position="233"/>
    </location>
</feature>
<feature type="binding site" evidence="1">
    <location>
        <position position="120"/>
    </location>
    <ligand>
        <name>Mn(2+)</name>
        <dbReference type="ChEBI" id="CHEBI:29035"/>
    </ligand>
</feature>
<feature type="binding site" evidence="1">
    <location>
        <position position="122"/>
    </location>
    <ligand>
        <name>Ca(2+)</name>
        <dbReference type="ChEBI" id="CHEBI:29108"/>
    </ligand>
</feature>
<feature type="binding site" evidence="1">
    <location>
        <position position="122"/>
    </location>
    <ligand>
        <name>Mn(2+)</name>
        <dbReference type="ChEBI" id="CHEBI:29035"/>
    </ligand>
</feature>
<feature type="binding site" evidence="1">
    <location>
        <position position="124"/>
    </location>
    <ligand>
        <name>Ca(2+)</name>
        <dbReference type="ChEBI" id="CHEBI:29108"/>
    </ligand>
</feature>
<feature type="binding site" evidence="1">
    <location>
        <position position="126"/>
    </location>
    <ligand>
        <name>Ca(2+)</name>
        <dbReference type="ChEBI" id="CHEBI:29108"/>
    </ligand>
</feature>
<feature type="binding site" evidence="1">
    <location>
        <position position="130"/>
    </location>
    <ligand>
        <name>Ca(2+)</name>
        <dbReference type="ChEBI" id="CHEBI:29108"/>
    </ligand>
</feature>
<feature type="binding site" evidence="1">
    <location>
        <position position="130"/>
    </location>
    <ligand>
        <name>Mn(2+)</name>
        <dbReference type="ChEBI" id="CHEBI:29035"/>
    </ligand>
</feature>
<feature type="binding site" evidence="1">
    <location>
        <position position="137"/>
    </location>
    <ligand>
        <name>Mn(2+)</name>
        <dbReference type="ChEBI" id="CHEBI:29035"/>
    </ligand>
</feature>
<feature type="glycosylation site" description="N-linked (GlcNAc...) asparagine" evidence="3">
    <location>
        <position position="168"/>
    </location>
</feature>
<feature type="strand" evidence="5">
    <location>
        <begin position="5"/>
        <end position="11"/>
    </location>
</feature>
<feature type="strand" evidence="5">
    <location>
        <begin position="19"/>
        <end position="23"/>
    </location>
</feature>
<feature type="strand" evidence="5">
    <location>
        <begin position="29"/>
        <end position="35"/>
    </location>
</feature>
<feature type="strand" evidence="5">
    <location>
        <begin position="37"/>
        <end position="40"/>
    </location>
</feature>
<feature type="strand" evidence="5">
    <location>
        <begin position="42"/>
        <end position="49"/>
    </location>
</feature>
<feature type="turn" evidence="5">
    <location>
        <begin position="56"/>
        <end position="58"/>
    </location>
</feature>
<feature type="strand" evidence="5">
    <location>
        <begin position="63"/>
        <end position="73"/>
    </location>
</feature>
<feature type="strand" evidence="5">
    <location>
        <begin position="83"/>
        <end position="90"/>
    </location>
</feature>
<feature type="helix" evidence="5">
    <location>
        <begin position="99"/>
        <end position="101"/>
    </location>
</feature>
<feature type="turn" evidence="5">
    <location>
        <begin position="102"/>
        <end position="104"/>
    </location>
</feature>
<feature type="strand" evidence="5">
    <location>
        <begin position="112"/>
        <end position="114"/>
    </location>
</feature>
<feature type="strand" evidence="5">
    <location>
        <begin position="117"/>
        <end position="122"/>
    </location>
</feature>
<feature type="turn" evidence="5">
    <location>
        <begin position="127"/>
        <end position="129"/>
    </location>
</feature>
<feature type="strand" evidence="5">
    <location>
        <begin position="137"/>
        <end position="146"/>
    </location>
</feature>
<feature type="strand" evidence="5">
    <location>
        <begin position="148"/>
        <end position="152"/>
    </location>
</feature>
<feature type="strand" evidence="5">
    <location>
        <begin position="161"/>
        <end position="168"/>
    </location>
</feature>
<feature type="turn" evidence="5">
    <location>
        <begin position="169"/>
        <end position="172"/>
    </location>
</feature>
<feature type="strand" evidence="5">
    <location>
        <begin position="173"/>
        <end position="179"/>
    </location>
</feature>
<feature type="strand" evidence="5">
    <location>
        <begin position="185"/>
        <end position="191"/>
    </location>
</feature>
<feature type="helix" evidence="5">
    <location>
        <begin position="194"/>
        <end position="196"/>
    </location>
</feature>
<feature type="strand" evidence="5">
    <location>
        <begin position="200"/>
        <end position="209"/>
    </location>
</feature>
<feature type="strand" evidence="5">
    <location>
        <begin position="211"/>
        <end position="213"/>
    </location>
</feature>
<feature type="strand" evidence="5">
    <location>
        <begin position="216"/>
        <end position="227"/>
    </location>
</feature>
<organism>
    <name type="scientific">Vicia faba</name>
    <name type="common">Broad bean</name>
    <name type="synonym">Faba vulgaris</name>
    <dbReference type="NCBI Taxonomy" id="3906"/>
    <lineage>
        <taxon>Eukaryota</taxon>
        <taxon>Viridiplantae</taxon>
        <taxon>Streptophyta</taxon>
        <taxon>Embryophyta</taxon>
        <taxon>Tracheophyta</taxon>
        <taxon>Spermatophyta</taxon>
        <taxon>Magnoliopsida</taxon>
        <taxon>eudicotyledons</taxon>
        <taxon>Gunneridae</taxon>
        <taxon>Pentapetalae</taxon>
        <taxon>rosids</taxon>
        <taxon>fabids</taxon>
        <taxon>Fabales</taxon>
        <taxon>Fabaceae</taxon>
        <taxon>Papilionoideae</taxon>
        <taxon>50 kb inversion clade</taxon>
        <taxon>NPAAA clade</taxon>
        <taxon>Hologalegina</taxon>
        <taxon>IRL clade</taxon>
        <taxon>Fabeae</taxon>
        <taxon>Vicia</taxon>
    </lineage>
</organism>
<evidence type="ECO:0000250" key="1"/>
<evidence type="ECO:0000269" key="2">
    <source>
    </source>
</evidence>
<evidence type="ECO:0000269" key="3">
    <source>
    </source>
</evidence>
<evidence type="ECO:0000305" key="4"/>
<evidence type="ECO:0007829" key="5">
    <source>
        <dbReference type="PDB" id="2B7Y"/>
    </source>
</evidence>